<keyword id="KW-0067">ATP-binding</keyword>
<keyword id="KW-0378">Hydrolase</keyword>
<keyword id="KW-0547">Nucleotide-binding</keyword>
<keyword id="KW-0645">Protease</keyword>
<keyword id="KW-1185">Reference proteome</keyword>
<keyword id="KW-0720">Serine protease</keyword>
<evidence type="ECO:0000255" key="1"/>
<evidence type="ECO:0000305" key="2"/>
<organism>
    <name type="scientific">Thermoplasma acidophilum (strain ATCC 25905 / DSM 1728 / JCM 9062 / NBRC 15155 / AMRC-C165)</name>
    <dbReference type="NCBI Taxonomy" id="273075"/>
    <lineage>
        <taxon>Archaea</taxon>
        <taxon>Methanobacteriati</taxon>
        <taxon>Thermoplasmatota</taxon>
        <taxon>Thermoplasmata</taxon>
        <taxon>Thermoplasmatales</taxon>
        <taxon>Thermoplasmataceae</taxon>
        <taxon>Thermoplasma</taxon>
    </lineage>
</organism>
<reference key="1">
    <citation type="journal article" date="2000" name="Nature">
        <title>The genome sequence of the thermoacidophilic scavenger Thermoplasma acidophilum.</title>
        <authorList>
            <person name="Ruepp A."/>
            <person name="Graml W."/>
            <person name="Santos-Martinez M.-L."/>
            <person name="Koretke K.K."/>
            <person name="Volker C."/>
            <person name="Mewes H.-W."/>
            <person name="Frishman D."/>
            <person name="Stocker S."/>
            <person name="Lupas A.N."/>
            <person name="Baumeister W."/>
        </authorList>
    </citation>
    <scope>NUCLEOTIDE SEQUENCE [LARGE SCALE GENOMIC DNA]</scope>
    <source>
        <strain>ATCC 25905 / DSM 1728 / JCM 9062 / NBRC 15155 / AMRC-C165</strain>
    </source>
</reference>
<gene>
    <name type="ordered locus">Ta0098</name>
</gene>
<dbReference type="EC" id="3.4.21.-"/>
<dbReference type="EMBL" id="AL445063">
    <property type="protein sequence ID" value="CAC11246.1"/>
    <property type="molecule type" value="Genomic_DNA"/>
</dbReference>
<dbReference type="RefSeq" id="WP_010900525.1">
    <property type="nucleotide sequence ID" value="NC_002578.1"/>
</dbReference>
<dbReference type="SMR" id="Q9HLX6"/>
<dbReference type="STRING" id="273075.gene:9571313"/>
<dbReference type="PaxDb" id="273075-Ta0098"/>
<dbReference type="EnsemblBacteria" id="CAC11246">
    <property type="protein sequence ID" value="CAC11246"/>
    <property type="gene ID" value="CAC11246"/>
</dbReference>
<dbReference type="KEGG" id="tac:Ta0098"/>
<dbReference type="eggNOG" id="arCOG02162">
    <property type="taxonomic scope" value="Archaea"/>
</dbReference>
<dbReference type="HOGENOM" id="CLU_550564_0_0_2"/>
<dbReference type="InParanoid" id="Q9HLX6"/>
<dbReference type="OrthoDB" id="64652at2157"/>
<dbReference type="Proteomes" id="UP000001024">
    <property type="component" value="Chromosome"/>
</dbReference>
<dbReference type="GO" id="GO:0005524">
    <property type="term" value="F:ATP binding"/>
    <property type="evidence" value="ECO:0007669"/>
    <property type="project" value="UniProtKB-KW"/>
</dbReference>
<dbReference type="GO" id="GO:0016887">
    <property type="term" value="F:ATP hydrolysis activity"/>
    <property type="evidence" value="ECO:0007669"/>
    <property type="project" value="InterPro"/>
</dbReference>
<dbReference type="GO" id="GO:0008236">
    <property type="term" value="F:serine-type peptidase activity"/>
    <property type="evidence" value="ECO:0007669"/>
    <property type="project" value="UniProtKB-KW"/>
</dbReference>
<dbReference type="GO" id="GO:0006508">
    <property type="term" value="P:proteolysis"/>
    <property type="evidence" value="ECO:0007669"/>
    <property type="project" value="UniProtKB-KW"/>
</dbReference>
<dbReference type="GO" id="GO:0006355">
    <property type="term" value="P:regulation of DNA-templated transcription"/>
    <property type="evidence" value="ECO:0007669"/>
    <property type="project" value="InterPro"/>
</dbReference>
<dbReference type="Gene3D" id="1.10.8.60">
    <property type="match status" value="1"/>
</dbReference>
<dbReference type="Gene3D" id="3.40.50.300">
    <property type="entry name" value="P-loop containing nucleotide triphosphate hydrolases"/>
    <property type="match status" value="2"/>
</dbReference>
<dbReference type="InterPro" id="IPR003593">
    <property type="entry name" value="AAA+_ATPase"/>
</dbReference>
<dbReference type="InterPro" id="IPR050764">
    <property type="entry name" value="CbbQ/NirQ/NorQ/GpvN"/>
</dbReference>
<dbReference type="InterPro" id="IPR000523">
    <property type="entry name" value="Mg_chelatse_chII-like_cat_dom"/>
</dbReference>
<dbReference type="InterPro" id="IPR027417">
    <property type="entry name" value="P-loop_NTPase"/>
</dbReference>
<dbReference type="InterPro" id="IPR002078">
    <property type="entry name" value="Sigma_54_int"/>
</dbReference>
<dbReference type="PANTHER" id="PTHR42759:SF1">
    <property type="entry name" value="MAGNESIUM-CHELATASE SUBUNIT CHLD"/>
    <property type="match status" value="1"/>
</dbReference>
<dbReference type="PANTHER" id="PTHR42759">
    <property type="entry name" value="MOXR FAMILY PROTEIN"/>
    <property type="match status" value="1"/>
</dbReference>
<dbReference type="Pfam" id="PF01078">
    <property type="entry name" value="Mg_chelatase"/>
    <property type="match status" value="1"/>
</dbReference>
<dbReference type="Pfam" id="PF00158">
    <property type="entry name" value="Sigma54_activat"/>
    <property type="match status" value="1"/>
</dbReference>
<dbReference type="SMART" id="SM00382">
    <property type="entry name" value="AAA"/>
    <property type="match status" value="1"/>
</dbReference>
<dbReference type="SUPFAM" id="SSF52540">
    <property type="entry name" value="P-loop containing nucleoside triphosphate hydrolases"/>
    <property type="match status" value="1"/>
</dbReference>
<accession>Q9HLX6</accession>
<protein>
    <recommendedName>
        <fullName>Putative lon protease homolog</fullName>
        <ecNumber>3.4.21.-</ecNumber>
    </recommendedName>
    <alternativeName>
        <fullName>ATP-dependent protease La homolog</fullName>
    </alternativeName>
</protein>
<feature type="chain" id="PRO_0000076157" description="Putative lon protease homolog">
    <location>
        <begin position="1"/>
        <end position="493"/>
    </location>
</feature>
<feature type="binding site" evidence="1">
    <location>
        <begin position="52"/>
        <end position="59"/>
    </location>
    <ligand>
        <name>ATP</name>
        <dbReference type="ChEBI" id="CHEBI:30616"/>
    </ligand>
</feature>
<proteinExistence type="inferred from homology"/>
<sequence length="493" mass="55536">MGTFFVDFYNEYPDTSYIKIPTNPLDRVIGQDDAVKIAMVAAKQRRHLLLVGPPGVGKSMIAQAMSFYIDRPTEEIRVVHNPQYPERPFVEIKTREEVMAEREEETSTSGIIIDPKDAPTSVAERLGYRCSKCGFYSSPSDAVCPNCNSPKIQMGTQGPFGDVFNVIGAAFGVQNNLDKVTLTRRNGDHDEIIVYERYNDKIRVLDEKTLERRRRLEKKSPSKTIVPIDRNPFVLATGASETELLGDVRHDPYGGHPQLGTLPYERVIAGAVHEAHQGVLFIDEITHLGNLQRYILTAMQEKTFPITGRNPQSAGASVRVDKVPADFILVAACNINDLPYILSPLRSRIVGNGYEILMKTTMKDTDENRMKYLQFISQEITMDGKIPHMTMEAAELIIEEGKKRARIIDKKNNELTLRLRELGGLIRAAGDIAVFKGNKLIEKEDVEEAIKLYVPVEEKITKEYGSMAAAYSSENTTSQKDFYNYNLDDRSYE</sequence>
<name>LONH_THEAC</name>
<comment type="similarity">
    <text evidence="2">Belongs to the peptidase S16 family.</text>
</comment>
<comment type="caution">
    <text evidence="2">Lacks the conserved Ser-Lys catalytic dyad essential for proteolytic activity. Its enzyme activity is therefore unsure.</text>
</comment>